<accession>Q0A2H5</accession>
<evidence type="ECO:0000255" key="1">
    <source>
        <dbReference type="HAMAP-Rule" id="MF_04069"/>
    </source>
</evidence>
<evidence type="ECO:0000256" key="2">
    <source>
        <dbReference type="SAM" id="MobiDB-lite"/>
    </source>
</evidence>
<proteinExistence type="inferred from homology"/>
<name>M2_I59A0</name>
<keyword id="KW-0025">Alternative splicing</keyword>
<keyword id="KW-1015">Disulfide bond</keyword>
<keyword id="KW-1032">Host cell membrane</keyword>
<keyword id="KW-1043">Host membrane</keyword>
<keyword id="KW-0945">Host-virus interaction</keyword>
<keyword id="KW-0375">Hydrogen ion transport</keyword>
<keyword id="KW-1083">Inhibition of host autophagy by virus</keyword>
<keyword id="KW-0407">Ion channel</keyword>
<keyword id="KW-0406">Ion transport</keyword>
<keyword id="KW-0449">Lipoprotein</keyword>
<keyword id="KW-0472">Membrane</keyword>
<keyword id="KW-0564">Palmitate</keyword>
<keyword id="KW-0597">Phosphoprotein</keyword>
<keyword id="KW-0735">Signal-anchor</keyword>
<keyword id="KW-0812">Transmembrane</keyword>
<keyword id="KW-1133">Transmembrane helix</keyword>
<keyword id="KW-0813">Transport</keyword>
<keyword id="KW-1182">Viral ion channel</keyword>
<keyword id="KW-0946">Virion</keyword>
<protein>
    <recommendedName>
        <fullName evidence="1">Matrix protein 2</fullName>
    </recommendedName>
    <alternativeName>
        <fullName evidence="1">Proton channel protein M2</fullName>
    </alternativeName>
</protein>
<dbReference type="EMBL" id="CY015082">
    <property type="protein sequence ID" value="ABI85108.1"/>
    <property type="molecule type" value="Genomic_RNA"/>
</dbReference>
<dbReference type="SMR" id="Q0A2H5"/>
<dbReference type="IntAct" id="Q0A2H5">
    <property type="interactions" value="1"/>
</dbReference>
<dbReference type="Proteomes" id="UP000169634">
    <property type="component" value="Genome"/>
</dbReference>
<dbReference type="GO" id="GO:0020002">
    <property type="term" value="C:host cell plasma membrane"/>
    <property type="evidence" value="ECO:0007669"/>
    <property type="project" value="UniProtKB-SubCell"/>
</dbReference>
<dbReference type="GO" id="GO:0016020">
    <property type="term" value="C:membrane"/>
    <property type="evidence" value="ECO:0007669"/>
    <property type="project" value="UniProtKB-UniRule"/>
</dbReference>
<dbReference type="GO" id="GO:0055036">
    <property type="term" value="C:virion membrane"/>
    <property type="evidence" value="ECO:0007669"/>
    <property type="project" value="UniProtKB-SubCell"/>
</dbReference>
<dbReference type="GO" id="GO:0005216">
    <property type="term" value="F:monoatomic ion channel activity"/>
    <property type="evidence" value="ECO:0007669"/>
    <property type="project" value="UniProtKB-UniRule"/>
</dbReference>
<dbReference type="GO" id="GO:0015078">
    <property type="term" value="F:proton transmembrane transporter activity"/>
    <property type="evidence" value="ECO:0007669"/>
    <property type="project" value="UniProtKB-UniRule"/>
</dbReference>
<dbReference type="GO" id="GO:0051259">
    <property type="term" value="P:protein complex oligomerization"/>
    <property type="evidence" value="ECO:0007669"/>
    <property type="project" value="UniProtKB-UniRule"/>
</dbReference>
<dbReference type="GO" id="GO:0044694">
    <property type="term" value="P:symbiont genome entry into host cell via pore formation in plasma membrane"/>
    <property type="evidence" value="ECO:0007669"/>
    <property type="project" value="UniProtKB-UniRule"/>
</dbReference>
<dbReference type="GO" id="GO:0140321">
    <property type="term" value="P:symbiont-mediated suppression of host autophagy"/>
    <property type="evidence" value="ECO:0007669"/>
    <property type="project" value="UniProtKB-KW"/>
</dbReference>
<dbReference type="Gene3D" id="6.10.250.1640">
    <property type="match status" value="1"/>
</dbReference>
<dbReference type="HAMAP" id="MF_04069">
    <property type="entry name" value="INFV_M2"/>
    <property type="match status" value="1"/>
</dbReference>
<dbReference type="InterPro" id="IPR002089">
    <property type="entry name" value="Flu_M2"/>
</dbReference>
<dbReference type="Pfam" id="PF00599">
    <property type="entry name" value="Flu_M2"/>
    <property type="match status" value="1"/>
</dbReference>
<organism>
    <name type="scientific">Influenza A virus (strain A/Chicken/Scotland/1959 H5N1)</name>
    <dbReference type="NCBI Taxonomy" id="402527"/>
    <lineage>
        <taxon>Viruses</taxon>
        <taxon>Riboviria</taxon>
        <taxon>Orthornavirae</taxon>
        <taxon>Negarnaviricota</taxon>
        <taxon>Polyploviricotina</taxon>
        <taxon>Insthoviricetes</taxon>
        <taxon>Articulavirales</taxon>
        <taxon>Orthomyxoviridae</taxon>
        <taxon>Alphainfluenzavirus</taxon>
        <taxon>Alphainfluenzavirus influenzae</taxon>
        <taxon>Influenza A virus</taxon>
    </lineage>
</organism>
<comment type="function">
    <text evidence="1">Forms a proton-selective ion channel that is necessary for the efficient release of the viral genome during virus entry. After attaching to the cell surface, the virion enters the cell by endocytosis. Acidification of the endosome triggers M2 ion channel activity. The influx of protons into virion interior is believed to disrupt interactions between the viral ribonucleoprotein (RNP), matrix protein 1 (M1), and lipid bilayers, thereby freeing the viral genome from interaction with viral proteins and enabling RNA segments to migrate to the host cell nucleus, where influenza virus RNA transcription and replication occur. Also plays a role in viral proteins secretory pathway. Elevates the intravesicular pH of normally acidic compartments, such as trans-Golgi network, preventing newly formed hemagglutinin from premature switching to the fusion-active conformation.</text>
</comment>
<comment type="activity regulation">
    <text>The M2 protein from most influenza A strains is inhibited by amantadine and rimantadine, resulting in viral uncoating incapacity. Emergence of amantadine-resistant variants is usually rapid.</text>
</comment>
<comment type="subunit">
    <text evidence="1">Homotetramer; composed of two disulfide-linked dimers held together by non-covalent interactions. May interact with matrix protein 1.</text>
</comment>
<comment type="subcellular location">
    <subcellularLocation>
        <location evidence="1">Virion membrane</location>
    </subcellularLocation>
    <subcellularLocation>
        <location evidence="1">Host apical cell membrane</location>
        <topology evidence="1">Single-pass type III membrane protein</topology>
    </subcellularLocation>
    <text evidence="1">Abundantly expressed at the apical plasma membrane in infected polarized epithelial cells, in close proximity to budding and assembled virions. Minor component of virions (only 16-20 molecules/virion).</text>
</comment>
<comment type="alternative products">
    <event type="alternative splicing"/>
    <isoform>
        <id>Q0A2H5-1</id>
        <name>M2</name>
        <sequence type="displayed"/>
    </isoform>
    <isoform>
        <id>Q0A2H4-1</id>
        <name>M1</name>
        <sequence type="external"/>
    </isoform>
    <text>Only the first 9 residues are shared by the 2 isoforms.</text>
</comment>
<comment type="domain">
    <text evidence="1">Cytoplasmic tail plays an important role in virion assembly and morphogenesis.</text>
</comment>
<comment type="miscellaneous">
    <text evidence="1">When the channel is activated, one or more imidazole moieties of His-37 probably become bi-protonated.</text>
</comment>
<comment type="similarity">
    <text evidence="1">Belongs to the influenza viruses matrix protein M2 family.</text>
</comment>
<gene>
    <name evidence="1" type="primary">M</name>
</gene>
<reference key="1">
    <citation type="journal article" date="2006" name="Science">
        <title>Large-scale sequence analysis of avian influenza isolates.</title>
        <authorList>
            <person name="Obenauer J.C."/>
            <person name="Denson J."/>
            <person name="Mehta P.K."/>
            <person name="Su X."/>
            <person name="Mukatira S."/>
            <person name="Finkelstein D.B."/>
            <person name="Xu X."/>
            <person name="Wang J."/>
            <person name="Ma J."/>
            <person name="Fan Y."/>
            <person name="Rakestraw K.M."/>
            <person name="Webster R.G."/>
            <person name="Hoffmann E."/>
            <person name="Krauss S."/>
            <person name="Zheng J."/>
            <person name="Zhang Z."/>
            <person name="Naeve C.W."/>
        </authorList>
    </citation>
    <scope>NUCLEOTIDE SEQUENCE [GENOMIC RNA]</scope>
</reference>
<feature type="chain" id="PRO_0000309848" description="Matrix protein 2">
    <location>
        <begin position="1"/>
        <end position="97"/>
    </location>
</feature>
<feature type="topological domain" description="Virion surface" evidence="1">
    <location>
        <begin position="1"/>
        <end position="22"/>
    </location>
</feature>
<feature type="transmembrane region" description="Helical; Signal-anchor for type III membrane protein" evidence="1">
    <location>
        <begin position="23"/>
        <end position="43"/>
    </location>
</feature>
<feature type="topological domain" description="Intravirion" evidence="1">
    <location>
        <begin position="44"/>
        <end position="97"/>
    </location>
</feature>
<feature type="region of interest" description="Disordered" evidence="2">
    <location>
        <begin position="58"/>
        <end position="80"/>
    </location>
</feature>
<feature type="site" description="Essential for channel activity, possibly by being protonated during channel activation, and by forming the channel gate and the selective filter" evidence="1">
    <location>
        <position position="37"/>
    </location>
</feature>
<feature type="site" description="Seems to be involved in pH gating" evidence="1">
    <location>
        <position position="41"/>
    </location>
</feature>
<feature type="modified residue" description="Phosphoserine; by host" evidence="1">
    <location>
        <position position="64"/>
    </location>
</feature>
<feature type="lipid moiety-binding region" description="S-palmitoyl cysteine; by host" evidence="1">
    <location>
        <position position="50"/>
    </location>
</feature>
<feature type="disulfide bond" description="Interchain (with C-17)" evidence="1">
    <location>
        <position position="17"/>
    </location>
</feature>
<feature type="disulfide bond" description="Interchain (with C-19)" evidence="1">
    <location>
        <position position="19"/>
    </location>
</feature>
<sequence length="97" mass="11061">MSLLTEVETPTRNGWECRCSDSSDPLVIAASIIGILHLILWILDCLFFKCIYRRLKYGLKGGPSTEGVPESMREEYRQEQQNAVDVDDGHFVNIELE</sequence>
<organismHost>
    <name type="scientific">Aves</name>
    <dbReference type="NCBI Taxonomy" id="8782"/>
</organismHost>
<organismHost>
    <name type="scientific">Felis catus</name>
    <name type="common">Cat</name>
    <name type="synonym">Felis silvestris catus</name>
    <dbReference type="NCBI Taxonomy" id="9685"/>
</organismHost>
<organismHost>
    <name type="scientific">Homo sapiens</name>
    <name type="common">Human</name>
    <dbReference type="NCBI Taxonomy" id="9606"/>
</organismHost>
<organismHost>
    <name type="scientific">Panthera pardus</name>
    <name type="common">Leopard</name>
    <name type="synonym">Felis pardus</name>
    <dbReference type="NCBI Taxonomy" id="9691"/>
</organismHost>
<organismHost>
    <name type="scientific">Panthera tigris</name>
    <name type="common">Tiger</name>
    <dbReference type="NCBI Taxonomy" id="9694"/>
</organismHost>
<organismHost>
    <name type="scientific">Sus scrofa</name>
    <name type="common">Pig</name>
    <dbReference type="NCBI Taxonomy" id="9823"/>
</organismHost>